<protein>
    <recommendedName>
        <fullName evidence="2">Small ribosomal subunit protein uS7cz/uS7cy</fullName>
    </recommendedName>
    <alternativeName>
        <fullName>30S ribosomal protein S7, chloroplastic</fullName>
    </alternativeName>
</protein>
<gene>
    <name type="primary">rps7-A</name>
</gene>
<gene>
    <name type="primary">rps7-B</name>
</gene>
<keyword id="KW-0150">Chloroplast</keyword>
<keyword id="KW-0934">Plastid</keyword>
<keyword id="KW-0687">Ribonucleoprotein</keyword>
<keyword id="KW-0689">Ribosomal protein</keyword>
<keyword id="KW-0694">RNA-binding</keyword>
<keyword id="KW-0699">rRNA-binding</keyword>
<evidence type="ECO:0000250" key="1"/>
<evidence type="ECO:0000255" key="2">
    <source>
        <dbReference type="HAMAP-Rule" id="MF_00480"/>
    </source>
</evidence>
<evidence type="ECO:0000305" key="3"/>
<proteinExistence type="inferred from homology"/>
<organism>
    <name type="scientific">Angiopteris evecta</name>
    <name type="common">Mule's foot fern</name>
    <name type="synonym">Polypodium evectum</name>
    <dbReference type="NCBI Taxonomy" id="13825"/>
    <lineage>
        <taxon>Eukaryota</taxon>
        <taxon>Viridiplantae</taxon>
        <taxon>Streptophyta</taxon>
        <taxon>Embryophyta</taxon>
        <taxon>Tracheophyta</taxon>
        <taxon>Polypodiopsida</taxon>
        <taxon>Marattiidae</taxon>
        <taxon>Marattiales</taxon>
        <taxon>Marattiaceae</taxon>
        <taxon>Angiopteris</taxon>
    </lineage>
</organism>
<name>RR7_ANGEV</name>
<geneLocation type="chloroplast"/>
<comment type="function">
    <text evidence="1">One of the primary rRNA binding proteins, it binds directly to 16S rRNA where it nucleates assembly of the head domain of the 30S subunit.</text>
</comment>
<comment type="subunit">
    <text evidence="1">Part of the 30S ribosomal subunit.</text>
</comment>
<comment type="subcellular location">
    <subcellularLocation>
        <location>Plastid</location>
        <location>Chloroplast</location>
    </subcellularLocation>
</comment>
<comment type="similarity">
    <text evidence="3">Belongs to the universal ribosomal protein uS7 family.</text>
</comment>
<feature type="chain" id="PRO_0000344324" description="Small ribosomal subunit protein uS7cz/uS7cy">
    <location>
        <begin position="1"/>
        <end position="155"/>
    </location>
</feature>
<dbReference type="EMBL" id="DQ821119">
    <property type="protein sequence ID" value="ABG79645.1"/>
    <property type="molecule type" value="Genomic_DNA"/>
</dbReference>
<dbReference type="EMBL" id="DQ821119">
    <property type="protein sequence ID" value="ABG79661.1"/>
    <property type="molecule type" value="Genomic_DNA"/>
</dbReference>
<dbReference type="SMR" id="A2T378"/>
<dbReference type="GO" id="GO:0009507">
    <property type="term" value="C:chloroplast"/>
    <property type="evidence" value="ECO:0007669"/>
    <property type="project" value="UniProtKB-SubCell"/>
</dbReference>
<dbReference type="GO" id="GO:0015935">
    <property type="term" value="C:small ribosomal subunit"/>
    <property type="evidence" value="ECO:0007669"/>
    <property type="project" value="InterPro"/>
</dbReference>
<dbReference type="GO" id="GO:0019843">
    <property type="term" value="F:rRNA binding"/>
    <property type="evidence" value="ECO:0007669"/>
    <property type="project" value="UniProtKB-UniRule"/>
</dbReference>
<dbReference type="GO" id="GO:0003735">
    <property type="term" value="F:structural constituent of ribosome"/>
    <property type="evidence" value="ECO:0007669"/>
    <property type="project" value="InterPro"/>
</dbReference>
<dbReference type="GO" id="GO:0006412">
    <property type="term" value="P:translation"/>
    <property type="evidence" value="ECO:0007669"/>
    <property type="project" value="UniProtKB-UniRule"/>
</dbReference>
<dbReference type="CDD" id="cd14871">
    <property type="entry name" value="uS7_Chloroplast"/>
    <property type="match status" value="1"/>
</dbReference>
<dbReference type="FunFam" id="1.10.455.10:FF:000001">
    <property type="entry name" value="30S ribosomal protein S7"/>
    <property type="match status" value="1"/>
</dbReference>
<dbReference type="Gene3D" id="1.10.455.10">
    <property type="entry name" value="Ribosomal protein S7 domain"/>
    <property type="match status" value="1"/>
</dbReference>
<dbReference type="HAMAP" id="MF_00480_B">
    <property type="entry name" value="Ribosomal_uS7_B"/>
    <property type="match status" value="1"/>
</dbReference>
<dbReference type="InterPro" id="IPR000235">
    <property type="entry name" value="Ribosomal_uS7"/>
</dbReference>
<dbReference type="InterPro" id="IPR005717">
    <property type="entry name" value="Ribosomal_uS7_bac/org-type"/>
</dbReference>
<dbReference type="InterPro" id="IPR020606">
    <property type="entry name" value="Ribosomal_uS7_CS"/>
</dbReference>
<dbReference type="InterPro" id="IPR023798">
    <property type="entry name" value="Ribosomal_uS7_dom"/>
</dbReference>
<dbReference type="InterPro" id="IPR036823">
    <property type="entry name" value="Ribosomal_uS7_dom_sf"/>
</dbReference>
<dbReference type="NCBIfam" id="TIGR01029">
    <property type="entry name" value="rpsG_bact"/>
    <property type="match status" value="1"/>
</dbReference>
<dbReference type="PANTHER" id="PTHR11205">
    <property type="entry name" value="RIBOSOMAL PROTEIN S7"/>
    <property type="match status" value="1"/>
</dbReference>
<dbReference type="Pfam" id="PF00177">
    <property type="entry name" value="Ribosomal_S7"/>
    <property type="match status" value="1"/>
</dbReference>
<dbReference type="PIRSF" id="PIRSF002122">
    <property type="entry name" value="RPS7p_RPS7a_RPS5e_RPS7o"/>
    <property type="match status" value="1"/>
</dbReference>
<dbReference type="SUPFAM" id="SSF47973">
    <property type="entry name" value="Ribosomal protein S7"/>
    <property type="match status" value="1"/>
</dbReference>
<dbReference type="PROSITE" id="PS00052">
    <property type="entry name" value="RIBOSOMAL_S7"/>
    <property type="match status" value="1"/>
</dbReference>
<accession>A2T378</accession>
<reference key="1">
    <citation type="journal article" date="2007" name="Am. Fern J.">
        <title>The complete plastid genome sequence of Angiopteris evecta (G. Forst.) Hoffm. (Marattiaceae).</title>
        <authorList>
            <person name="Roper J.M."/>
            <person name="Hansen S.K."/>
            <person name="Wolf P.G."/>
            <person name="Karol K.G."/>
            <person name="Mandoli D.F."/>
            <person name="Everett K.D.E."/>
            <person name="Kuehl J.V."/>
            <person name="Boore J.L."/>
        </authorList>
    </citation>
    <scope>NUCLEOTIDE SEQUENCE [LARGE SCALE GENOMIC DNA]</scope>
</reference>
<sequence length="155" mass="17433">MSRRSTAAGETAKSDPIYRNRLVNMLVNRLLKDGKKSLAYRILYQAMKQIKQKTQKNPLSVLRQAVRRVTPNVAVKARRVGGSTYQVPVEIIPAQGKALAIRWLLGASRKRPGRSMALKSSYELMDAAKNNGSAVRKKEETHRMAEANKAFAHFR</sequence>